<keyword id="KW-0414">Isoprene biosynthesis</keyword>
<keyword id="KW-0548">Nucleotidyltransferase</keyword>
<keyword id="KW-1185">Reference proteome</keyword>
<keyword id="KW-0808">Transferase</keyword>
<evidence type="ECO:0000255" key="1">
    <source>
        <dbReference type="HAMAP-Rule" id="MF_00108"/>
    </source>
</evidence>
<comment type="function">
    <text evidence="1">Catalyzes the formation of 4-diphosphocytidyl-2-C-methyl-D-erythritol from CTP and 2-C-methyl-D-erythritol 4-phosphate (MEP).</text>
</comment>
<comment type="catalytic activity">
    <reaction evidence="1">
        <text>2-C-methyl-D-erythritol 4-phosphate + CTP + H(+) = 4-CDP-2-C-methyl-D-erythritol + diphosphate</text>
        <dbReference type="Rhea" id="RHEA:13429"/>
        <dbReference type="ChEBI" id="CHEBI:15378"/>
        <dbReference type="ChEBI" id="CHEBI:33019"/>
        <dbReference type="ChEBI" id="CHEBI:37563"/>
        <dbReference type="ChEBI" id="CHEBI:57823"/>
        <dbReference type="ChEBI" id="CHEBI:58262"/>
        <dbReference type="EC" id="2.7.7.60"/>
    </reaction>
</comment>
<comment type="pathway">
    <text evidence="1">Isoprenoid biosynthesis; isopentenyl diphosphate biosynthesis via DXP pathway; isopentenyl diphosphate from 1-deoxy-D-xylulose 5-phosphate: step 2/6.</text>
</comment>
<comment type="similarity">
    <text evidence="1">Belongs to the IspD/TarI cytidylyltransferase family. IspD subfamily.</text>
</comment>
<feature type="chain" id="PRO_1000094319" description="2-C-methyl-D-erythritol 4-phosphate cytidylyltransferase">
    <location>
        <begin position="1"/>
        <end position="245"/>
    </location>
</feature>
<feature type="site" description="Transition state stabilizer" evidence="1">
    <location>
        <position position="15"/>
    </location>
</feature>
<feature type="site" description="Transition state stabilizer" evidence="1">
    <location>
        <position position="24"/>
    </location>
</feature>
<feature type="site" description="Positions MEP for the nucleophilic attack" evidence="1">
    <location>
        <position position="166"/>
    </location>
</feature>
<feature type="site" description="Positions MEP for the nucleophilic attack" evidence="1">
    <location>
        <position position="224"/>
    </location>
</feature>
<protein>
    <recommendedName>
        <fullName evidence="1">2-C-methyl-D-erythritol 4-phosphate cytidylyltransferase</fullName>
        <ecNumber evidence="1">2.7.7.60</ecNumber>
    </recommendedName>
    <alternativeName>
        <fullName evidence="1">4-diphosphocytidyl-2C-methyl-D-erythritol synthase</fullName>
    </alternativeName>
    <alternativeName>
        <fullName evidence="1">MEP cytidylyltransferase</fullName>
        <shortName evidence="1">MCT</shortName>
    </alternativeName>
</protein>
<accession>B3QXK8</accession>
<proteinExistence type="inferred from homology"/>
<reference key="1">
    <citation type="submission" date="2008-06" db="EMBL/GenBank/DDBJ databases">
        <title>Complete sequence of Chloroherpeton thalassium ATCC 35110.</title>
        <authorList>
            <consortium name="US DOE Joint Genome Institute"/>
            <person name="Lucas S."/>
            <person name="Copeland A."/>
            <person name="Lapidus A."/>
            <person name="Glavina del Rio T."/>
            <person name="Dalin E."/>
            <person name="Tice H."/>
            <person name="Bruce D."/>
            <person name="Goodwin L."/>
            <person name="Pitluck S."/>
            <person name="Schmutz J."/>
            <person name="Larimer F."/>
            <person name="Land M."/>
            <person name="Hauser L."/>
            <person name="Kyrpides N."/>
            <person name="Mikhailova N."/>
            <person name="Liu Z."/>
            <person name="Li T."/>
            <person name="Zhao F."/>
            <person name="Overmann J."/>
            <person name="Bryant D.A."/>
            <person name="Richardson P."/>
        </authorList>
    </citation>
    <scope>NUCLEOTIDE SEQUENCE [LARGE SCALE GENOMIC DNA]</scope>
    <source>
        <strain>ATCC 35110 / GB-78</strain>
    </source>
</reference>
<gene>
    <name evidence="1" type="primary">ispD</name>
    <name type="ordered locus">Ctha_2474</name>
</gene>
<organism>
    <name type="scientific">Chloroherpeton thalassium (strain ATCC 35110 / GB-78)</name>
    <dbReference type="NCBI Taxonomy" id="517418"/>
    <lineage>
        <taxon>Bacteria</taxon>
        <taxon>Pseudomonadati</taxon>
        <taxon>Chlorobiota</taxon>
        <taxon>Chlorobiia</taxon>
        <taxon>Chlorobiales</taxon>
        <taxon>Chloroherpetonaceae</taxon>
        <taxon>Chloroherpeton</taxon>
    </lineage>
</organism>
<sequence>MQAIAIIAASGVGKRMKLPSGKTKQYLKLGVYPVIYYALSAFQQASSVEAIFVATLPSHIAYLQKMARRYGFHKVKFVIEGGKERQDSIFNCVEKIREVYGDDGALQDKVILIHDGVRPFIQPNEIDEIAELSKSFGACVPATKPKDTIKYIDGDDNRFFGETLDRSKLLQVQTPQGFRADLIMSAHQKAQSDSFYATDDAALTEAYFPEQKIKIFEMGYHNIKITTPEDMDLGKAILKRLRQSK</sequence>
<dbReference type="EC" id="2.7.7.60" evidence="1"/>
<dbReference type="EMBL" id="CP001100">
    <property type="protein sequence ID" value="ACF14923.1"/>
    <property type="molecule type" value="Genomic_DNA"/>
</dbReference>
<dbReference type="RefSeq" id="WP_012501005.1">
    <property type="nucleotide sequence ID" value="NC_011026.1"/>
</dbReference>
<dbReference type="SMR" id="B3QXK8"/>
<dbReference type="STRING" id="517418.Ctha_2474"/>
<dbReference type="KEGG" id="cts:Ctha_2474"/>
<dbReference type="eggNOG" id="COG1211">
    <property type="taxonomic scope" value="Bacteria"/>
</dbReference>
<dbReference type="HOGENOM" id="CLU_061281_2_2_10"/>
<dbReference type="OrthoDB" id="9806837at2"/>
<dbReference type="UniPathway" id="UPA00056">
    <property type="reaction ID" value="UER00093"/>
</dbReference>
<dbReference type="Proteomes" id="UP000001208">
    <property type="component" value="Chromosome"/>
</dbReference>
<dbReference type="GO" id="GO:0050518">
    <property type="term" value="F:2-C-methyl-D-erythritol 4-phosphate cytidylyltransferase activity"/>
    <property type="evidence" value="ECO:0007669"/>
    <property type="project" value="UniProtKB-UniRule"/>
</dbReference>
<dbReference type="GO" id="GO:0019288">
    <property type="term" value="P:isopentenyl diphosphate biosynthetic process, methylerythritol 4-phosphate pathway"/>
    <property type="evidence" value="ECO:0007669"/>
    <property type="project" value="UniProtKB-UniRule"/>
</dbReference>
<dbReference type="CDD" id="cd02516">
    <property type="entry name" value="CDP-ME_synthetase"/>
    <property type="match status" value="1"/>
</dbReference>
<dbReference type="FunFam" id="3.90.550.10:FF:000003">
    <property type="entry name" value="2-C-methyl-D-erythritol 4-phosphate cytidylyltransferase"/>
    <property type="match status" value="1"/>
</dbReference>
<dbReference type="Gene3D" id="3.90.550.10">
    <property type="entry name" value="Spore Coat Polysaccharide Biosynthesis Protein SpsA, Chain A"/>
    <property type="match status" value="1"/>
</dbReference>
<dbReference type="HAMAP" id="MF_00108">
    <property type="entry name" value="IspD"/>
    <property type="match status" value="1"/>
</dbReference>
<dbReference type="InterPro" id="IPR001228">
    <property type="entry name" value="IspD"/>
</dbReference>
<dbReference type="InterPro" id="IPR034683">
    <property type="entry name" value="IspD/TarI"/>
</dbReference>
<dbReference type="InterPro" id="IPR050088">
    <property type="entry name" value="IspD/TarI_cytidylyltransf_bact"/>
</dbReference>
<dbReference type="InterPro" id="IPR018294">
    <property type="entry name" value="ISPD_synthase_CS"/>
</dbReference>
<dbReference type="InterPro" id="IPR029044">
    <property type="entry name" value="Nucleotide-diphossugar_trans"/>
</dbReference>
<dbReference type="PANTHER" id="PTHR32125">
    <property type="entry name" value="2-C-METHYL-D-ERYTHRITOL 4-PHOSPHATE CYTIDYLYLTRANSFERASE, CHLOROPLASTIC"/>
    <property type="match status" value="1"/>
</dbReference>
<dbReference type="PANTHER" id="PTHR32125:SF4">
    <property type="entry name" value="2-C-METHYL-D-ERYTHRITOL 4-PHOSPHATE CYTIDYLYLTRANSFERASE, CHLOROPLASTIC"/>
    <property type="match status" value="1"/>
</dbReference>
<dbReference type="Pfam" id="PF01128">
    <property type="entry name" value="IspD"/>
    <property type="match status" value="1"/>
</dbReference>
<dbReference type="SUPFAM" id="SSF53448">
    <property type="entry name" value="Nucleotide-diphospho-sugar transferases"/>
    <property type="match status" value="1"/>
</dbReference>
<dbReference type="PROSITE" id="PS01295">
    <property type="entry name" value="ISPD"/>
    <property type="match status" value="1"/>
</dbReference>
<name>ISPD_CHLT3</name>